<reference key="1">
    <citation type="journal article" date="1997" name="J. Mol. Biol.">
        <title>A survey of polypeptide deformylase function throughout the eubacterial lineage.</title>
        <authorList>
            <person name="Mazel D."/>
            <person name="Coic E."/>
            <person name="Blanchard S."/>
            <person name="Saurin W."/>
            <person name="Marliere P."/>
        </authorList>
    </citation>
    <scope>NUCLEOTIDE SEQUENCE [GENOMIC DNA]</scope>
</reference>
<reference key="2">
    <citation type="journal article" date="1999" name="Nature">
        <title>Evidence for lateral gene transfer between Archaea and Bacteria from genome sequence of Thermotoga maritima.</title>
        <authorList>
            <person name="Nelson K.E."/>
            <person name="Clayton R.A."/>
            <person name="Gill S.R."/>
            <person name="Gwinn M.L."/>
            <person name="Dodson R.J."/>
            <person name="Haft D.H."/>
            <person name="Hickey E.K."/>
            <person name="Peterson J.D."/>
            <person name="Nelson W.C."/>
            <person name="Ketchum K.A."/>
            <person name="McDonald L.A."/>
            <person name="Utterback T.R."/>
            <person name="Malek J.A."/>
            <person name="Linher K.D."/>
            <person name="Garrett M.M."/>
            <person name="Stewart A.M."/>
            <person name="Cotton M.D."/>
            <person name="Pratt M.S."/>
            <person name="Phillips C.A."/>
            <person name="Richardson D.L."/>
            <person name="Heidelberg J.F."/>
            <person name="Sutton G.G."/>
            <person name="Fleischmann R.D."/>
            <person name="Eisen J.A."/>
            <person name="White O."/>
            <person name="Salzberg S.L."/>
            <person name="Smith H.O."/>
            <person name="Venter J.C."/>
            <person name="Fraser C.M."/>
        </authorList>
    </citation>
    <scope>NUCLEOTIDE SEQUENCE [LARGE SCALE GENOMIC DNA]</scope>
    <source>
        <strain>ATCC 43589 / DSM 3109 / JCM 10099 / NBRC 100826 / MSB8</strain>
    </source>
</reference>
<proteinExistence type="evidence at protein level"/>
<feature type="chain" id="PRO_0000082866" description="Peptide deformylase">
    <location>
        <begin position="1"/>
        <end position="164"/>
    </location>
</feature>
<feature type="active site" evidence="1">
    <location>
        <position position="130"/>
    </location>
</feature>
<feature type="binding site" evidence="1">
    <location>
        <position position="87"/>
    </location>
    <ligand>
        <name>Fe cation</name>
        <dbReference type="ChEBI" id="CHEBI:24875"/>
    </ligand>
</feature>
<feature type="binding site" evidence="1">
    <location>
        <position position="129"/>
    </location>
    <ligand>
        <name>Fe cation</name>
        <dbReference type="ChEBI" id="CHEBI:24875"/>
    </ligand>
</feature>
<feature type="binding site" evidence="1">
    <location>
        <position position="133"/>
    </location>
    <ligand>
        <name>Fe cation</name>
        <dbReference type="ChEBI" id="CHEBI:24875"/>
    </ligand>
</feature>
<feature type="helix" evidence="2">
    <location>
        <begin position="10"/>
        <end position="12"/>
    </location>
</feature>
<feature type="helix" evidence="2">
    <location>
        <begin position="24"/>
        <end position="39"/>
    </location>
</feature>
<feature type="strand" evidence="2">
    <location>
        <begin position="43"/>
        <end position="46"/>
    </location>
</feature>
<feature type="helix" evidence="2">
    <location>
        <begin position="47"/>
        <end position="50"/>
    </location>
</feature>
<feature type="strand" evidence="2">
    <location>
        <begin position="54"/>
        <end position="59"/>
    </location>
</feature>
<feature type="strand" evidence="2">
    <location>
        <begin position="61"/>
        <end position="63"/>
    </location>
</feature>
<feature type="strand" evidence="2">
    <location>
        <begin position="66"/>
        <end position="76"/>
    </location>
</feature>
<feature type="strand" evidence="2">
    <location>
        <begin position="80"/>
        <end position="85"/>
    </location>
</feature>
<feature type="strand" evidence="2">
    <location>
        <begin position="95"/>
        <end position="108"/>
    </location>
</feature>
<feature type="strand" evidence="2">
    <location>
        <begin position="114"/>
        <end position="120"/>
    </location>
</feature>
<feature type="helix" evidence="2">
    <location>
        <begin position="121"/>
        <end position="134"/>
    </location>
</feature>
<feature type="helix" evidence="2">
    <location>
        <begin position="139"/>
        <end position="142"/>
    </location>
</feature>
<accession>P96113</accession>
<protein>
    <recommendedName>
        <fullName evidence="1">Peptide deformylase</fullName>
        <shortName evidence="1">PDF</shortName>
        <ecNumber evidence="1">3.5.1.88</ecNumber>
    </recommendedName>
    <alternativeName>
        <fullName evidence="1">Polypeptide deformylase</fullName>
    </alternativeName>
</protein>
<dbReference type="EC" id="3.5.1.88" evidence="1"/>
<dbReference type="EMBL" id="Y10306">
    <property type="protein sequence ID" value="CAA71356.1"/>
    <property type="molecule type" value="Genomic_DNA"/>
</dbReference>
<dbReference type="EMBL" id="AE000512">
    <property type="protein sequence ID" value="AAD36728.1"/>
    <property type="molecule type" value="Genomic_DNA"/>
</dbReference>
<dbReference type="PIR" id="C72224">
    <property type="entry name" value="C72224"/>
</dbReference>
<dbReference type="RefSeq" id="NP_229461.1">
    <property type="nucleotide sequence ID" value="NC_000853.1"/>
</dbReference>
<dbReference type="RefSeq" id="WP_004082176.1">
    <property type="nucleotide sequence ID" value="NZ_CP011107.1"/>
</dbReference>
<dbReference type="PDB" id="1LME">
    <property type="method" value="X-ray"/>
    <property type="resolution" value="2.20 A"/>
    <property type="chains" value="A/B=1-164"/>
</dbReference>
<dbReference type="PDBsum" id="1LME"/>
<dbReference type="SMR" id="P96113"/>
<dbReference type="FunCoup" id="P96113">
    <property type="interactions" value="340"/>
</dbReference>
<dbReference type="STRING" id="243274.TM_1661"/>
<dbReference type="DrugBank" id="DB03661">
    <property type="generic name" value="L-cysteic acid"/>
</dbReference>
<dbReference type="PaxDb" id="243274-THEMA_05940"/>
<dbReference type="EnsemblBacteria" id="AAD36728">
    <property type="protein sequence ID" value="AAD36728"/>
    <property type="gene ID" value="TM_1661"/>
</dbReference>
<dbReference type="KEGG" id="tma:TM1661"/>
<dbReference type="KEGG" id="tmi:THEMA_05940"/>
<dbReference type="KEGG" id="tmm:Tmari_1670"/>
<dbReference type="KEGG" id="tmw:THMA_1702"/>
<dbReference type="eggNOG" id="COG0242">
    <property type="taxonomic scope" value="Bacteria"/>
</dbReference>
<dbReference type="InParanoid" id="P96113"/>
<dbReference type="OrthoDB" id="9784988at2"/>
<dbReference type="BRENDA" id="3.5.1.88">
    <property type="organism ID" value="6331"/>
</dbReference>
<dbReference type="EvolutionaryTrace" id="P96113"/>
<dbReference type="Proteomes" id="UP000008183">
    <property type="component" value="Chromosome"/>
</dbReference>
<dbReference type="GO" id="GO:0046872">
    <property type="term" value="F:metal ion binding"/>
    <property type="evidence" value="ECO:0007669"/>
    <property type="project" value="UniProtKB-KW"/>
</dbReference>
<dbReference type="GO" id="GO:0042586">
    <property type="term" value="F:peptide deformylase activity"/>
    <property type="evidence" value="ECO:0000318"/>
    <property type="project" value="GO_Central"/>
</dbReference>
<dbReference type="GO" id="GO:0043686">
    <property type="term" value="P:co-translational protein modification"/>
    <property type="evidence" value="ECO:0000318"/>
    <property type="project" value="GO_Central"/>
</dbReference>
<dbReference type="GO" id="GO:0006412">
    <property type="term" value="P:translation"/>
    <property type="evidence" value="ECO:0007669"/>
    <property type="project" value="UniProtKB-UniRule"/>
</dbReference>
<dbReference type="CDD" id="cd00487">
    <property type="entry name" value="Pep_deformylase"/>
    <property type="match status" value="1"/>
</dbReference>
<dbReference type="FunFam" id="3.90.45.10:FF:000013">
    <property type="entry name" value="Peptide deformylase"/>
    <property type="match status" value="1"/>
</dbReference>
<dbReference type="Gene3D" id="3.90.45.10">
    <property type="entry name" value="Peptide deformylase"/>
    <property type="match status" value="1"/>
</dbReference>
<dbReference type="HAMAP" id="MF_00163">
    <property type="entry name" value="Pep_deformylase"/>
    <property type="match status" value="1"/>
</dbReference>
<dbReference type="InterPro" id="IPR023635">
    <property type="entry name" value="Peptide_deformylase"/>
</dbReference>
<dbReference type="InterPro" id="IPR036821">
    <property type="entry name" value="Peptide_deformylase_sf"/>
</dbReference>
<dbReference type="NCBIfam" id="TIGR00079">
    <property type="entry name" value="pept_deformyl"/>
    <property type="match status" value="1"/>
</dbReference>
<dbReference type="NCBIfam" id="NF001159">
    <property type="entry name" value="PRK00150.1-3"/>
    <property type="match status" value="1"/>
</dbReference>
<dbReference type="PANTHER" id="PTHR10458">
    <property type="entry name" value="PEPTIDE DEFORMYLASE"/>
    <property type="match status" value="1"/>
</dbReference>
<dbReference type="PANTHER" id="PTHR10458:SF22">
    <property type="entry name" value="PEPTIDE DEFORMYLASE"/>
    <property type="match status" value="1"/>
</dbReference>
<dbReference type="Pfam" id="PF01327">
    <property type="entry name" value="Pep_deformylase"/>
    <property type="match status" value="1"/>
</dbReference>
<dbReference type="PIRSF" id="PIRSF004749">
    <property type="entry name" value="Pep_def"/>
    <property type="match status" value="1"/>
</dbReference>
<dbReference type="PRINTS" id="PR01576">
    <property type="entry name" value="PDEFORMYLASE"/>
</dbReference>
<dbReference type="SUPFAM" id="SSF56420">
    <property type="entry name" value="Peptide deformylase"/>
    <property type="match status" value="1"/>
</dbReference>
<comment type="function">
    <text evidence="1">Removes the formyl group from the N-terminal Met of newly synthesized proteins. Requires at least a dipeptide for an efficient rate of reaction. N-terminal L-methionine is a prerequisite for activity but the enzyme has broad specificity at other positions.</text>
</comment>
<comment type="catalytic activity">
    <reaction evidence="1">
        <text>N-terminal N-formyl-L-methionyl-[peptide] + H2O = N-terminal L-methionyl-[peptide] + formate</text>
        <dbReference type="Rhea" id="RHEA:24420"/>
        <dbReference type="Rhea" id="RHEA-COMP:10639"/>
        <dbReference type="Rhea" id="RHEA-COMP:10640"/>
        <dbReference type="ChEBI" id="CHEBI:15377"/>
        <dbReference type="ChEBI" id="CHEBI:15740"/>
        <dbReference type="ChEBI" id="CHEBI:49298"/>
        <dbReference type="ChEBI" id="CHEBI:64731"/>
        <dbReference type="EC" id="3.5.1.88"/>
    </reaction>
</comment>
<comment type="cofactor">
    <cofactor evidence="1">
        <name>Fe(2+)</name>
        <dbReference type="ChEBI" id="CHEBI:29033"/>
    </cofactor>
    <text evidence="1">Binds 1 Fe(2+) ion.</text>
</comment>
<comment type="similarity">
    <text evidence="1">Belongs to the polypeptide deformylase family.</text>
</comment>
<keyword id="KW-0002">3D-structure</keyword>
<keyword id="KW-0378">Hydrolase</keyword>
<keyword id="KW-0408">Iron</keyword>
<keyword id="KW-0479">Metal-binding</keyword>
<keyword id="KW-0648">Protein biosynthesis</keyword>
<keyword id="KW-1185">Reference proteome</keyword>
<organism>
    <name type="scientific">Thermotoga maritima (strain ATCC 43589 / DSM 3109 / JCM 10099 / NBRC 100826 / MSB8)</name>
    <dbReference type="NCBI Taxonomy" id="243274"/>
    <lineage>
        <taxon>Bacteria</taxon>
        <taxon>Thermotogati</taxon>
        <taxon>Thermotogota</taxon>
        <taxon>Thermotogae</taxon>
        <taxon>Thermotogales</taxon>
        <taxon>Thermotogaceae</taxon>
        <taxon>Thermotoga</taxon>
    </lineage>
</organism>
<sequence length="164" mass="19024">MYRIRVFGDPVLRKRAKPVTKFDENLKKTIERMIETMYHYDGVGLAAPQVGISQRFFVMDVGNGPVAVINPEILEIDPETEVAEEGCLSFPEIFVEIERSKRIKVKYQNTRGEYVEEELEGYAARVFQHEFDHLNGVLIIDRISPAKRLLLRKKLMDIARTVKR</sequence>
<gene>
    <name evidence="1" type="primary">def</name>
    <name type="ordered locus">TM_1661</name>
</gene>
<evidence type="ECO:0000255" key="1">
    <source>
        <dbReference type="HAMAP-Rule" id="MF_00163"/>
    </source>
</evidence>
<evidence type="ECO:0007829" key="2">
    <source>
        <dbReference type="PDB" id="1LME"/>
    </source>
</evidence>
<name>DEF_THEMA</name>